<protein>
    <recommendedName>
        <fullName>Spindle pole body component 110</fullName>
    </recommendedName>
    <alternativeName>
        <fullName>Extragenic suppressor of CMD1-1 mutant protein 1</fullName>
    </alternativeName>
    <alternativeName>
        <fullName>Nuclear filament-related protein 1</fullName>
    </alternativeName>
    <alternativeName>
        <fullName>Spindle pole body spacer protein SPC110</fullName>
    </alternativeName>
</protein>
<accession>A6ZYV5</accession>
<feature type="chain" id="PRO_0000409204" description="Spindle pole body component 110">
    <location>
        <begin position="1"/>
        <end position="944"/>
    </location>
</feature>
<feature type="region of interest" description="Disordered" evidence="4">
    <location>
        <begin position="23"/>
        <end position="110"/>
    </location>
</feature>
<feature type="region of interest" description="Calmodulin-binding" evidence="1">
    <location>
        <begin position="900"/>
        <end position="927"/>
    </location>
</feature>
<feature type="coiled-coil region" evidence="3">
    <location>
        <begin position="119"/>
        <end position="799"/>
    </location>
</feature>
<feature type="short sequence motif" description="Nuclear localization signal" evidence="3">
    <location>
        <begin position="54"/>
        <end position="59"/>
    </location>
</feature>
<feature type="short sequence motif" description="Nuclear localization signal" evidence="3">
    <location>
        <begin position="726"/>
        <end position="731"/>
    </location>
</feature>
<feature type="short sequence motif" description="Nuclear localization signal" evidence="3">
    <location>
        <begin position="742"/>
        <end position="747"/>
    </location>
</feature>
<feature type="compositionally biased region" description="Polar residues" evidence="4">
    <location>
        <begin position="28"/>
        <end position="46"/>
    </location>
</feature>
<feature type="compositionally biased region" description="Polar residues" evidence="4">
    <location>
        <begin position="67"/>
        <end position="78"/>
    </location>
</feature>
<feature type="compositionally biased region" description="Basic and acidic residues" evidence="4">
    <location>
        <begin position="96"/>
        <end position="110"/>
    </location>
</feature>
<feature type="modified residue" description="Phosphothreonine" evidence="2">
    <location>
        <position position="18"/>
    </location>
</feature>
<feature type="modified residue" description="Phosphoserine; by MPS1" evidence="2">
    <location>
        <position position="60"/>
    </location>
</feature>
<feature type="modified residue" description="Phosphothreonine; by MPS1" evidence="2">
    <location>
        <position position="64"/>
    </location>
</feature>
<feature type="modified residue" description="Phosphothreonine; by MPS1" evidence="2">
    <location>
        <position position="68"/>
    </location>
</feature>
<feature type="modified residue" description="Phosphoserine" evidence="2">
    <location>
        <position position="80"/>
    </location>
</feature>
<feature type="modified residue" description="Phosphoserine" evidence="2">
    <location>
        <position position="529"/>
    </location>
</feature>
<gene>
    <name type="primary">SPC110</name>
    <name type="synonym">NUF1</name>
    <name type="synonym">XCM1</name>
    <name type="ORF">SCY_1243</name>
</gene>
<organism>
    <name type="scientific">Saccharomyces cerevisiae (strain YJM789)</name>
    <name type="common">Baker's yeast</name>
    <dbReference type="NCBI Taxonomy" id="307796"/>
    <lineage>
        <taxon>Eukaryota</taxon>
        <taxon>Fungi</taxon>
        <taxon>Dikarya</taxon>
        <taxon>Ascomycota</taxon>
        <taxon>Saccharomycotina</taxon>
        <taxon>Saccharomycetes</taxon>
        <taxon>Saccharomycetales</taxon>
        <taxon>Saccharomycetaceae</taxon>
        <taxon>Saccharomyces</taxon>
    </lineage>
</organism>
<name>SP110_YEAS7</name>
<dbReference type="EMBL" id="AAFW02000145">
    <property type="protein sequence ID" value="EDN60685.1"/>
    <property type="molecule type" value="Genomic_DNA"/>
</dbReference>
<dbReference type="SMR" id="A6ZYV5"/>
<dbReference type="HOGENOM" id="CLU_329279_0_0_1"/>
<dbReference type="Proteomes" id="UP000007060">
    <property type="component" value="Unassembled WGS sequence"/>
</dbReference>
<dbReference type="GO" id="GO:0005737">
    <property type="term" value="C:cytoplasm"/>
    <property type="evidence" value="ECO:0007669"/>
    <property type="project" value="UniProtKB-KW"/>
</dbReference>
<dbReference type="GO" id="GO:0005643">
    <property type="term" value="C:nuclear pore"/>
    <property type="evidence" value="ECO:0007669"/>
    <property type="project" value="TreeGrafter"/>
</dbReference>
<dbReference type="GO" id="GO:0005816">
    <property type="term" value="C:spindle pole body"/>
    <property type="evidence" value="ECO:0007669"/>
    <property type="project" value="UniProtKB-SubCell"/>
</dbReference>
<dbReference type="GO" id="GO:0017056">
    <property type="term" value="F:structural constituent of nuclear pore"/>
    <property type="evidence" value="ECO:0007669"/>
    <property type="project" value="TreeGrafter"/>
</dbReference>
<dbReference type="GO" id="GO:0006406">
    <property type="term" value="P:mRNA export from nucleus"/>
    <property type="evidence" value="ECO:0007669"/>
    <property type="project" value="TreeGrafter"/>
</dbReference>
<dbReference type="Gene3D" id="1.10.287.1490">
    <property type="match status" value="1"/>
</dbReference>
<dbReference type="Gene3D" id="6.10.310.10">
    <property type="match status" value="1"/>
</dbReference>
<dbReference type="InterPro" id="IPR040593">
    <property type="entry name" value="Spc110_C"/>
</dbReference>
<dbReference type="PANTHER" id="PTHR18898:SF2">
    <property type="entry name" value="NUCLEOPROTEIN TPR"/>
    <property type="match status" value="1"/>
</dbReference>
<dbReference type="PANTHER" id="PTHR18898">
    <property type="entry name" value="NUCLEOPROTEIN TPR-RELATED"/>
    <property type="match status" value="1"/>
</dbReference>
<dbReference type="Pfam" id="PF18520">
    <property type="entry name" value="Spc110_C"/>
    <property type="match status" value="1"/>
</dbReference>
<dbReference type="SUPFAM" id="SSF57997">
    <property type="entry name" value="Tropomyosin"/>
    <property type="match status" value="1"/>
</dbReference>
<keyword id="KW-0175">Coiled coil</keyword>
<keyword id="KW-0963">Cytoplasm</keyword>
<keyword id="KW-0206">Cytoskeleton</keyword>
<keyword id="KW-0539">Nucleus</keyword>
<keyword id="KW-0597">Phosphoprotein</keyword>
<sequence>MDEASHLPNGSLKNMEFTPVGFIKSKRNTTQTQVVSPTKVPNANNGDENEGPVKKRQRRSIDDTIDSTRLFSEASQFDDSFPEIKANIPPSPRSGNVDKSRKRNLIDDLKKDVPMSQPLKEQEVREHQMKKERFDRALESKLLGKRHITYANSDISNKELYINEIKSLKHEIKELRKEKNDTLNNYDTLEEETDDLKNRLQALEKELDAKNKIVNSRKVDDHSGCIEEREQMERKLAELERKLKTVKDQVLELENNSDVQSLKLRSKEDELKNLMNELNELKSNAEEKDTQLEFKKNELRKRTNELNELKIKSDEMDLQLKQKQNESKRLKDELNELETKFSENGSQSSAKENELKMLKNKIAELEEEISTKNSQLIAKEGKLASLMAHLTQLESKLNQRDSQLGSREEELKKTNDKLQKDIRIAREETVSKDERITDLQKKVKQLENDLFVIKKTHSESKTITDNELESKDKLIKILENDLKVAQEKYSKMEKELKEREFNYKISESKLEDEKTTLNEKISNLAAENSQLKNKIEDNSTATHHMKENYEKQLESLRKDIEEYKESAKDSEDKIEELKIRIAENSAKVSEKRSKDIKQKDEQISDLTQNLKLQEDEISSLKSIIDRYKKDFNQLKSEQSNIQHDLNLQILNLENKLIESEDELKSLRDSQKIEIENWKRKYNNLSLENDRLLTEKESASDKEREISILNRKLDEMDKEKWNLQESKEKYKRELQKVITANDRLRREKEELNENSNNIRIMEDKMTRIKKNYLSEITSLQEENRRLEERLILNERRKDNDSTMQLNDIISYYKLKYHSEVRHNNDLKVINDYLNKVLALGTRRLRLDTRKGEHSLNISLPDDDELDRDYYNSHVYTRYHDYEYPLRFNLNRRGPYFERRLSFKTVALLVLACVRMKRIAFYRRSDDNRLRILRDRIESSSGRISW</sequence>
<evidence type="ECO:0000250" key="1"/>
<evidence type="ECO:0000250" key="2">
    <source>
        <dbReference type="UniProtKB" id="P32380"/>
    </source>
</evidence>
<evidence type="ECO:0000255" key="3"/>
<evidence type="ECO:0000256" key="4">
    <source>
        <dbReference type="SAM" id="MobiDB-lite"/>
    </source>
</evidence>
<evidence type="ECO:0000305" key="5"/>
<reference key="1">
    <citation type="journal article" date="2007" name="Proc. Natl. Acad. Sci. U.S.A.">
        <title>Genome sequencing and comparative analysis of Saccharomyces cerevisiae strain YJM789.</title>
        <authorList>
            <person name="Wei W."/>
            <person name="McCusker J.H."/>
            <person name="Hyman R.W."/>
            <person name="Jones T."/>
            <person name="Ning Y."/>
            <person name="Cao Z."/>
            <person name="Gu Z."/>
            <person name="Bruno D."/>
            <person name="Miranda M."/>
            <person name="Nguyen M."/>
            <person name="Wilhelmy J."/>
            <person name="Komp C."/>
            <person name="Tamse R."/>
            <person name="Wang X."/>
            <person name="Jia P."/>
            <person name="Luedi P."/>
            <person name="Oefner P.J."/>
            <person name="David L."/>
            <person name="Dietrich F.S."/>
            <person name="Li Y."/>
            <person name="Davis R.W."/>
            <person name="Steinmetz L.M."/>
        </authorList>
    </citation>
    <scope>NUCLEOTIDE SEQUENCE [LARGE SCALE GENOMIC DNA]</scope>
    <source>
        <strain>YJM789</strain>
    </source>
</reference>
<comment type="function">
    <text evidence="1">Component of the spindle pole body (SPB) required for the proper execution of spindle pole body (SPB) duplication. Potential role in cross-linking filaments or anchoring other molecules. It is essential for growth (By similarity).</text>
</comment>
<comment type="subunit">
    <text evidence="1">Homodimer. Component of the SPC110 complex containing at least CMD1, SPC29 and SCP110. Interacts with SPC97 and SPC98.</text>
</comment>
<comment type="subcellular location">
    <subcellularLocation>
        <location evidence="1">Nucleus</location>
    </subcellularLocation>
    <subcellularLocation>
        <location evidence="1">Cytoplasm</location>
        <location evidence="1">Cytoskeleton</location>
        <location evidence="1">Microtubule organizing center</location>
        <location evidence="1">Spindle pole body</location>
    </subcellularLocation>
    <text evidence="1">Tightly associated with the nucleus. It is present in a granular pattern that excludes the nucleolus.</text>
</comment>
<comment type="similarity">
    <text evidence="5">Belongs to the SPC110 family.</text>
</comment>
<proteinExistence type="inferred from homology"/>